<feature type="chain" id="PRO_0000062500" description="Ribulose bisphosphate carboxylase large chain">
    <location>
        <begin position="1" status="less than"/>
        <end position="466"/>
    </location>
</feature>
<feature type="active site" description="Proton acceptor" evidence="1">
    <location>
        <position position="165"/>
    </location>
</feature>
<feature type="active site" description="Proton acceptor" evidence="1">
    <location>
        <position position="284"/>
    </location>
</feature>
<feature type="binding site" description="in homodimeric partner" evidence="1">
    <location>
        <position position="113"/>
    </location>
    <ligand>
        <name>substrate</name>
    </ligand>
</feature>
<feature type="binding site" evidence="1">
    <location>
        <position position="163"/>
    </location>
    <ligand>
        <name>substrate</name>
    </ligand>
</feature>
<feature type="binding site" evidence="1">
    <location>
        <position position="167"/>
    </location>
    <ligand>
        <name>substrate</name>
    </ligand>
</feature>
<feature type="binding site" description="via carbamate group" evidence="1">
    <location>
        <position position="191"/>
    </location>
    <ligand>
        <name>Mg(2+)</name>
        <dbReference type="ChEBI" id="CHEBI:18420"/>
    </ligand>
</feature>
<feature type="binding site" evidence="1">
    <location>
        <position position="193"/>
    </location>
    <ligand>
        <name>Mg(2+)</name>
        <dbReference type="ChEBI" id="CHEBI:18420"/>
    </ligand>
</feature>
<feature type="binding site" evidence="1">
    <location>
        <position position="194"/>
    </location>
    <ligand>
        <name>Mg(2+)</name>
        <dbReference type="ChEBI" id="CHEBI:18420"/>
    </ligand>
</feature>
<feature type="binding site" evidence="1">
    <location>
        <position position="285"/>
    </location>
    <ligand>
        <name>substrate</name>
    </ligand>
</feature>
<feature type="binding site" evidence="1">
    <location>
        <position position="317"/>
    </location>
    <ligand>
        <name>substrate</name>
    </ligand>
</feature>
<feature type="binding site" evidence="1">
    <location>
        <position position="369"/>
    </location>
    <ligand>
        <name>substrate</name>
    </ligand>
</feature>
<feature type="site" description="Transition state stabilizer" evidence="1">
    <location>
        <position position="324"/>
    </location>
</feature>
<feature type="modified residue" description="N6,N6,N6-trimethyllysine" evidence="1">
    <location>
        <position position="4"/>
    </location>
</feature>
<feature type="modified residue" description="N6-carboxylysine" evidence="1">
    <location>
        <position position="191"/>
    </location>
</feature>
<feature type="disulfide bond" description="Interchain; in linked form" evidence="1">
    <location>
        <position position="237"/>
    </location>
</feature>
<feature type="non-terminal residue">
    <location>
        <position position="1"/>
    </location>
</feature>
<keyword id="KW-0113">Calvin cycle</keyword>
<keyword id="KW-0120">Carbon dioxide fixation</keyword>
<keyword id="KW-0150">Chloroplast</keyword>
<keyword id="KW-1015">Disulfide bond</keyword>
<keyword id="KW-0456">Lyase</keyword>
<keyword id="KW-0460">Magnesium</keyword>
<keyword id="KW-0479">Metal-binding</keyword>
<keyword id="KW-0488">Methylation</keyword>
<keyword id="KW-0503">Monooxygenase</keyword>
<keyword id="KW-0560">Oxidoreductase</keyword>
<keyword id="KW-0601">Photorespiration</keyword>
<keyword id="KW-0602">Photosynthesis</keyword>
<keyword id="KW-0934">Plastid</keyword>
<accession>P28428</accession>
<reference key="1">
    <citation type="journal article" date="1992" name="Science">
        <title>Carnivorous plants: phylogeny and structural evolution.</title>
        <authorList>
            <person name="Albert V.A."/>
            <person name="Williams S.E."/>
            <person name="Chase M.W."/>
        </authorList>
    </citation>
    <scope>NUCLEOTIDE SEQUENCE [GENOMIC DNA]</scope>
</reference>
<geneLocation type="chloroplast"/>
<proteinExistence type="inferred from homology"/>
<evidence type="ECO:0000255" key="1">
    <source>
        <dbReference type="HAMAP-Rule" id="MF_01338"/>
    </source>
</evidence>
<gene>
    <name evidence="1" type="primary">rbcL</name>
</gene>
<sequence>VGFKAGVKEYKLTYYTPEYETKDTDILAAFRVTPQPGVPPEEAGAAVAAESSTGTWTTVWTDGLTSLDRYKGRCYNIEPVLGETDQYICYVAYPLDLFEEGSVTNMFTSIVGNVFGFKALRALRLEDLRIPPAYIKTFQGPPHGIQVERDELNKYGRPLLGCTIKPKLGLSAKNYGRACYECLRGGLDFTKDDENVNSQPFMRWRDRFLFCAEAIYKAQAETGEIKGHYLNATAGTCEEMIKRAVFARELGVPIVMHDYLTGGFTANTSLAHYCRDNGLLLHIHRAMHAVIDRQKNHGMHFRVLAKALRLSGGDHIHSGTVVGKLEGERDITLGFVDLLRDDFIEKDRSRGIYFTQDWVSLPGVIPVASGGIHVWHMPALTEIFGDDSVLQFGGGTLGHPWGNAPGAVANRVALEACVQARNEGRDLAAEGNEIIREPSKWSPELAAACEVWKEIKFEFKAVDTLD</sequence>
<organism>
    <name type="scientific">Justicia odora</name>
    <name type="common">Water willow</name>
    <name type="synonym">Dianthera odora</name>
    <dbReference type="NCBI Taxonomy" id="4191"/>
    <lineage>
        <taxon>Eukaryota</taxon>
        <taxon>Viridiplantae</taxon>
        <taxon>Streptophyta</taxon>
        <taxon>Embryophyta</taxon>
        <taxon>Tracheophyta</taxon>
        <taxon>Spermatophyta</taxon>
        <taxon>Magnoliopsida</taxon>
        <taxon>eudicotyledons</taxon>
        <taxon>Gunneridae</taxon>
        <taxon>Pentapetalae</taxon>
        <taxon>asterids</taxon>
        <taxon>lamiids</taxon>
        <taxon>Lamiales</taxon>
        <taxon>Acanthaceae</taxon>
        <taxon>Acanthoideae</taxon>
        <taxon>Justicieae</taxon>
        <taxon>Justicia</taxon>
    </lineage>
</organism>
<name>RBL_JUSOD</name>
<dbReference type="EC" id="4.1.1.39" evidence="1"/>
<dbReference type="EMBL" id="L01930">
    <property type="protein sequence ID" value="AAA84338.2"/>
    <property type="molecule type" value="Genomic_DNA"/>
</dbReference>
<dbReference type="SMR" id="P28428"/>
<dbReference type="GO" id="GO:0009507">
    <property type="term" value="C:chloroplast"/>
    <property type="evidence" value="ECO:0007669"/>
    <property type="project" value="UniProtKB-SubCell"/>
</dbReference>
<dbReference type="GO" id="GO:0000287">
    <property type="term" value="F:magnesium ion binding"/>
    <property type="evidence" value="ECO:0007669"/>
    <property type="project" value="InterPro"/>
</dbReference>
<dbReference type="GO" id="GO:0004497">
    <property type="term" value="F:monooxygenase activity"/>
    <property type="evidence" value="ECO:0007669"/>
    <property type="project" value="UniProtKB-KW"/>
</dbReference>
<dbReference type="GO" id="GO:0016984">
    <property type="term" value="F:ribulose-bisphosphate carboxylase activity"/>
    <property type="evidence" value="ECO:0007669"/>
    <property type="project" value="UniProtKB-EC"/>
</dbReference>
<dbReference type="GO" id="GO:0009853">
    <property type="term" value="P:photorespiration"/>
    <property type="evidence" value="ECO:0007669"/>
    <property type="project" value="UniProtKB-KW"/>
</dbReference>
<dbReference type="GO" id="GO:0019253">
    <property type="term" value="P:reductive pentose-phosphate cycle"/>
    <property type="evidence" value="ECO:0007669"/>
    <property type="project" value="UniProtKB-KW"/>
</dbReference>
<dbReference type="CDD" id="cd08212">
    <property type="entry name" value="RuBisCO_large_I"/>
    <property type="match status" value="1"/>
</dbReference>
<dbReference type="FunFam" id="3.20.20.110:FF:000001">
    <property type="entry name" value="Ribulose bisphosphate carboxylase large chain"/>
    <property type="match status" value="1"/>
</dbReference>
<dbReference type="FunFam" id="3.30.70.150:FF:000001">
    <property type="entry name" value="Ribulose bisphosphate carboxylase large chain"/>
    <property type="match status" value="1"/>
</dbReference>
<dbReference type="Gene3D" id="3.20.20.110">
    <property type="entry name" value="Ribulose bisphosphate carboxylase, large subunit, C-terminal domain"/>
    <property type="match status" value="1"/>
</dbReference>
<dbReference type="Gene3D" id="3.30.70.150">
    <property type="entry name" value="RuBisCO large subunit, N-terminal domain"/>
    <property type="match status" value="1"/>
</dbReference>
<dbReference type="HAMAP" id="MF_01338">
    <property type="entry name" value="RuBisCO_L_type1"/>
    <property type="match status" value="1"/>
</dbReference>
<dbReference type="InterPro" id="IPR033966">
    <property type="entry name" value="RuBisCO"/>
</dbReference>
<dbReference type="InterPro" id="IPR020878">
    <property type="entry name" value="RuBisCo_large_chain_AS"/>
</dbReference>
<dbReference type="InterPro" id="IPR000685">
    <property type="entry name" value="RuBisCO_lsu_C"/>
</dbReference>
<dbReference type="InterPro" id="IPR036376">
    <property type="entry name" value="RuBisCO_lsu_C_sf"/>
</dbReference>
<dbReference type="InterPro" id="IPR017443">
    <property type="entry name" value="RuBisCO_lsu_fd_N"/>
</dbReference>
<dbReference type="InterPro" id="IPR036422">
    <property type="entry name" value="RuBisCO_lsu_N_sf"/>
</dbReference>
<dbReference type="InterPro" id="IPR020888">
    <property type="entry name" value="RuBisCO_lsuI"/>
</dbReference>
<dbReference type="NCBIfam" id="NF003252">
    <property type="entry name" value="PRK04208.1"/>
    <property type="match status" value="1"/>
</dbReference>
<dbReference type="PANTHER" id="PTHR42704">
    <property type="entry name" value="RIBULOSE BISPHOSPHATE CARBOXYLASE"/>
    <property type="match status" value="1"/>
</dbReference>
<dbReference type="PANTHER" id="PTHR42704:SF15">
    <property type="entry name" value="RIBULOSE BISPHOSPHATE CARBOXYLASE LARGE CHAIN"/>
    <property type="match status" value="1"/>
</dbReference>
<dbReference type="Pfam" id="PF00016">
    <property type="entry name" value="RuBisCO_large"/>
    <property type="match status" value="1"/>
</dbReference>
<dbReference type="Pfam" id="PF02788">
    <property type="entry name" value="RuBisCO_large_N"/>
    <property type="match status" value="1"/>
</dbReference>
<dbReference type="SFLD" id="SFLDG01052">
    <property type="entry name" value="RuBisCO"/>
    <property type="match status" value="1"/>
</dbReference>
<dbReference type="SFLD" id="SFLDS00014">
    <property type="entry name" value="RuBisCO"/>
    <property type="match status" value="1"/>
</dbReference>
<dbReference type="SFLD" id="SFLDG00301">
    <property type="entry name" value="RuBisCO-like_proteins"/>
    <property type="match status" value="1"/>
</dbReference>
<dbReference type="SUPFAM" id="SSF51649">
    <property type="entry name" value="RuBisCo, C-terminal domain"/>
    <property type="match status" value="1"/>
</dbReference>
<dbReference type="SUPFAM" id="SSF54966">
    <property type="entry name" value="RuBisCO, large subunit, small (N-terminal) domain"/>
    <property type="match status" value="1"/>
</dbReference>
<dbReference type="PROSITE" id="PS00157">
    <property type="entry name" value="RUBISCO_LARGE"/>
    <property type="match status" value="1"/>
</dbReference>
<comment type="function">
    <text evidence="1">RuBisCO catalyzes two reactions: the carboxylation of D-ribulose 1,5-bisphosphate, the primary event in carbon dioxide fixation, as well as the oxidative fragmentation of the pentose substrate in the photorespiration process. Both reactions occur simultaneously and in competition at the same active site.</text>
</comment>
<comment type="catalytic activity">
    <reaction evidence="1">
        <text>2 (2R)-3-phosphoglycerate + 2 H(+) = D-ribulose 1,5-bisphosphate + CO2 + H2O</text>
        <dbReference type="Rhea" id="RHEA:23124"/>
        <dbReference type="ChEBI" id="CHEBI:15377"/>
        <dbReference type="ChEBI" id="CHEBI:15378"/>
        <dbReference type="ChEBI" id="CHEBI:16526"/>
        <dbReference type="ChEBI" id="CHEBI:57870"/>
        <dbReference type="ChEBI" id="CHEBI:58272"/>
        <dbReference type="EC" id="4.1.1.39"/>
    </reaction>
</comment>
<comment type="catalytic activity">
    <reaction evidence="1">
        <text>D-ribulose 1,5-bisphosphate + O2 = 2-phosphoglycolate + (2R)-3-phosphoglycerate + 2 H(+)</text>
        <dbReference type="Rhea" id="RHEA:36631"/>
        <dbReference type="ChEBI" id="CHEBI:15378"/>
        <dbReference type="ChEBI" id="CHEBI:15379"/>
        <dbReference type="ChEBI" id="CHEBI:57870"/>
        <dbReference type="ChEBI" id="CHEBI:58033"/>
        <dbReference type="ChEBI" id="CHEBI:58272"/>
    </reaction>
</comment>
<comment type="cofactor">
    <cofactor evidence="1">
        <name>Mg(2+)</name>
        <dbReference type="ChEBI" id="CHEBI:18420"/>
    </cofactor>
    <text evidence="1">Binds 1 Mg(2+) ion per subunit.</text>
</comment>
<comment type="subunit">
    <text evidence="1">Heterohexadecamer of 8 large chains and 8 small chains; disulfide-linked. The disulfide link is formed within the large subunit homodimers.</text>
</comment>
<comment type="subcellular location">
    <subcellularLocation>
        <location>Plastid</location>
        <location>Chloroplast</location>
    </subcellularLocation>
</comment>
<comment type="PTM">
    <text evidence="1">The disulfide bond which can form in the large chain dimeric partners within the hexadecamer appears to be associated with oxidative stress and protein turnover.</text>
</comment>
<comment type="miscellaneous">
    <text evidence="1">The basic functional RuBisCO is composed of a large chain homodimer in a 'head-to-tail' conformation. In form I RuBisCO this homodimer is arranged in a barrel-like tetramer with the small subunits forming a tetrameric 'cap' on each end of the 'barrel'.</text>
</comment>
<comment type="similarity">
    <text evidence="1">Belongs to the RuBisCO large chain family. Type I subfamily.</text>
</comment>
<protein>
    <recommendedName>
        <fullName evidence="1">Ribulose bisphosphate carboxylase large chain</fullName>
        <shortName evidence="1">RuBisCO large subunit</shortName>
        <ecNumber evidence="1">4.1.1.39</ecNumber>
    </recommendedName>
</protein>